<evidence type="ECO:0000255" key="1">
    <source>
        <dbReference type="HAMAP-Rule" id="MF_00157"/>
    </source>
</evidence>
<evidence type="ECO:0000256" key="2">
    <source>
        <dbReference type="SAM" id="MobiDB-lite"/>
    </source>
</evidence>
<sequence length="225" mass="24601">MSEDHFDEEHEGHGGGGGSRHPMAARFRGYLPVVVDVETGGFNSATDALLEIAAVTIGMDERGFVFPEHTYFFRVEPFVGANIEAAALEFTGIKLDHPLRMAVSEETAMNDIFRGVRKALKANGCKRAVLVGHNASFDLGFVNAAVARMDMKRNPFHPFSSFDTATLAGLAYGQTVLAKACQAAGIDFDGREAHSARYDTEKTAELFCGIVNRWKEMGGWEDFDD</sequence>
<reference key="1">
    <citation type="journal article" date="2003" name="Proc. Natl. Acad. Sci. U.S.A.">
        <title>The complete genome sequence of the Arabidopsis and tomato pathogen Pseudomonas syringae pv. tomato DC3000.</title>
        <authorList>
            <person name="Buell C.R."/>
            <person name="Joardar V."/>
            <person name="Lindeberg M."/>
            <person name="Selengut J."/>
            <person name="Paulsen I.T."/>
            <person name="Gwinn M.L."/>
            <person name="Dodson R.J."/>
            <person name="DeBoy R.T."/>
            <person name="Durkin A.S."/>
            <person name="Kolonay J.F."/>
            <person name="Madupu R."/>
            <person name="Daugherty S.C."/>
            <person name="Brinkac L.M."/>
            <person name="Beanan M.J."/>
            <person name="Haft D.H."/>
            <person name="Nelson W.C."/>
            <person name="Davidsen T.M."/>
            <person name="Zafar N."/>
            <person name="Zhou L."/>
            <person name="Liu J."/>
            <person name="Yuan Q."/>
            <person name="Khouri H.M."/>
            <person name="Fedorova N.B."/>
            <person name="Tran B."/>
            <person name="Russell D."/>
            <person name="Berry K.J."/>
            <person name="Utterback T.R."/>
            <person name="Van Aken S.E."/>
            <person name="Feldblyum T.V."/>
            <person name="D'Ascenzo M."/>
            <person name="Deng W.-L."/>
            <person name="Ramos A.R."/>
            <person name="Alfano J.R."/>
            <person name="Cartinhour S."/>
            <person name="Chatterjee A.K."/>
            <person name="Delaney T.P."/>
            <person name="Lazarowitz S.G."/>
            <person name="Martin G.B."/>
            <person name="Schneider D.J."/>
            <person name="Tang X."/>
            <person name="Bender C.L."/>
            <person name="White O."/>
            <person name="Fraser C.M."/>
            <person name="Collmer A."/>
        </authorList>
    </citation>
    <scope>NUCLEOTIDE SEQUENCE [LARGE SCALE GENOMIC DNA]</scope>
    <source>
        <strain>ATCC BAA-871 / DC3000</strain>
    </source>
</reference>
<feature type="chain" id="PRO_0000208971" description="Ribonuclease T">
    <location>
        <begin position="1"/>
        <end position="225"/>
    </location>
</feature>
<feature type="domain" description="Exonuclease" evidence="1">
    <location>
        <begin position="33"/>
        <end position="207"/>
    </location>
</feature>
<feature type="region of interest" description="Disordered" evidence="2">
    <location>
        <begin position="1"/>
        <end position="21"/>
    </location>
</feature>
<feature type="active site" description="Proton donor/acceptor" evidence="1">
    <location>
        <position position="194"/>
    </location>
</feature>
<feature type="binding site" evidence="1">
    <location>
        <position position="36"/>
    </location>
    <ligand>
        <name>Mg(2+)</name>
        <dbReference type="ChEBI" id="CHEBI:18420"/>
        <label>1</label>
        <note>catalytic</note>
    </ligand>
</feature>
<feature type="binding site" evidence="1">
    <location>
        <position position="36"/>
    </location>
    <ligand>
        <name>Mg(2+)</name>
        <dbReference type="ChEBI" id="CHEBI:18420"/>
        <label>2</label>
        <note>catalytic</note>
    </ligand>
</feature>
<feature type="binding site" evidence="1">
    <location>
        <position position="38"/>
    </location>
    <ligand>
        <name>Mg(2+)</name>
        <dbReference type="ChEBI" id="CHEBI:18420"/>
        <label>2</label>
        <note>catalytic</note>
    </ligand>
</feature>
<feature type="binding site" evidence="1">
    <location>
        <position position="194"/>
    </location>
    <ligand>
        <name>Mg(2+)</name>
        <dbReference type="ChEBI" id="CHEBI:18420"/>
        <label>2</label>
        <note>catalytic</note>
    </ligand>
</feature>
<feature type="binding site" evidence="1">
    <location>
        <position position="199"/>
    </location>
    <ligand>
        <name>Mg(2+)</name>
        <dbReference type="ChEBI" id="CHEBI:18420"/>
        <label>2</label>
        <note>catalytic</note>
    </ligand>
</feature>
<feature type="site" description="Important for substrate binding and specificity" evidence="1">
    <location>
        <position position="42"/>
    </location>
</feature>
<feature type="site" description="Important for substrate binding and specificity" evidence="1">
    <location>
        <position position="90"/>
    </location>
</feature>
<feature type="site" description="Important for substrate binding and specificity" evidence="1">
    <location>
        <position position="137"/>
    </location>
</feature>
<feature type="site" description="Important for substrate binding and specificity" evidence="1">
    <location>
        <position position="159"/>
    </location>
</feature>
<gene>
    <name evidence="1" type="primary">rnt</name>
    <name type="ordered locus">PSPTO_4158</name>
</gene>
<accession>Q87XM0</accession>
<dbReference type="EC" id="3.1.13.-" evidence="1"/>
<dbReference type="EMBL" id="AE016853">
    <property type="protein sequence ID" value="AAO57614.1"/>
    <property type="molecule type" value="Genomic_DNA"/>
</dbReference>
<dbReference type="RefSeq" id="NP_793919.1">
    <property type="nucleotide sequence ID" value="NC_004578.1"/>
</dbReference>
<dbReference type="RefSeq" id="WP_005764850.1">
    <property type="nucleotide sequence ID" value="NC_004578.1"/>
</dbReference>
<dbReference type="SMR" id="Q87XM0"/>
<dbReference type="STRING" id="223283.PSPTO_4158"/>
<dbReference type="GeneID" id="1185838"/>
<dbReference type="KEGG" id="pst:PSPTO_4158"/>
<dbReference type="PATRIC" id="fig|223283.9.peg.4268"/>
<dbReference type="eggNOG" id="COG0847">
    <property type="taxonomic scope" value="Bacteria"/>
</dbReference>
<dbReference type="HOGENOM" id="CLU_082724_0_0_6"/>
<dbReference type="OrthoDB" id="9778264at2"/>
<dbReference type="PhylomeDB" id="Q87XM0"/>
<dbReference type="Proteomes" id="UP000002515">
    <property type="component" value="Chromosome"/>
</dbReference>
<dbReference type="GO" id="GO:0005829">
    <property type="term" value="C:cytosol"/>
    <property type="evidence" value="ECO:0007669"/>
    <property type="project" value="TreeGrafter"/>
</dbReference>
<dbReference type="GO" id="GO:0008408">
    <property type="term" value="F:3'-5' exonuclease activity"/>
    <property type="evidence" value="ECO:0007669"/>
    <property type="project" value="TreeGrafter"/>
</dbReference>
<dbReference type="GO" id="GO:0000287">
    <property type="term" value="F:magnesium ion binding"/>
    <property type="evidence" value="ECO:0007669"/>
    <property type="project" value="UniProtKB-UniRule"/>
</dbReference>
<dbReference type="GO" id="GO:0003676">
    <property type="term" value="F:nucleic acid binding"/>
    <property type="evidence" value="ECO:0007669"/>
    <property type="project" value="InterPro"/>
</dbReference>
<dbReference type="GO" id="GO:0016896">
    <property type="term" value="F:RNA exonuclease activity, producing 5'-phosphomonoesters"/>
    <property type="evidence" value="ECO:0007669"/>
    <property type="project" value="UniProtKB-UniRule"/>
</dbReference>
<dbReference type="GO" id="GO:0045004">
    <property type="term" value="P:DNA replication proofreading"/>
    <property type="evidence" value="ECO:0007669"/>
    <property type="project" value="TreeGrafter"/>
</dbReference>
<dbReference type="GO" id="GO:0008033">
    <property type="term" value="P:tRNA processing"/>
    <property type="evidence" value="ECO:0007669"/>
    <property type="project" value="UniProtKB-KW"/>
</dbReference>
<dbReference type="CDD" id="cd06134">
    <property type="entry name" value="RNaseT"/>
    <property type="match status" value="1"/>
</dbReference>
<dbReference type="FunFam" id="3.30.420.10:FF:000009">
    <property type="entry name" value="Ribonuclease T"/>
    <property type="match status" value="1"/>
</dbReference>
<dbReference type="Gene3D" id="3.30.420.10">
    <property type="entry name" value="Ribonuclease H-like superfamily/Ribonuclease H"/>
    <property type="match status" value="1"/>
</dbReference>
<dbReference type="HAMAP" id="MF_00157">
    <property type="entry name" value="RNase_T"/>
    <property type="match status" value="1"/>
</dbReference>
<dbReference type="InterPro" id="IPR013520">
    <property type="entry name" value="Exonuclease_RNaseT/DNA_pol3"/>
</dbReference>
<dbReference type="InterPro" id="IPR005987">
    <property type="entry name" value="RNase_T"/>
</dbReference>
<dbReference type="InterPro" id="IPR012337">
    <property type="entry name" value="RNaseH-like_sf"/>
</dbReference>
<dbReference type="InterPro" id="IPR036397">
    <property type="entry name" value="RNaseH_sf"/>
</dbReference>
<dbReference type="NCBIfam" id="TIGR01298">
    <property type="entry name" value="RNaseT"/>
    <property type="match status" value="1"/>
</dbReference>
<dbReference type="PANTHER" id="PTHR30231">
    <property type="entry name" value="DNA POLYMERASE III SUBUNIT EPSILON"/>
    <property type="match status" value="1"/>
</dbReference>
<dbReference type="PANTHER" id="PTHR30231:SF2">
    <property type="entry name" value="RIBONUCLEASE T"/>
    <property type="match status" value="1"/>
</dbReference>
<dbReference type="Pfam" id="PF00929">
    <property type="entry name" value="RNase_T"/>
    <property type="match status" value="1"/>
</dbReference>
<dbReference type="SMART" id="SM00479">
    <property type="entry name" value="EXOIII"/>
    <property type="match status" value="1"/>
</dbReference>
<dbReference type="SUPFAM" id="SSF53098">
    <property type="entry name" value="Ribonuclease H-like"/>
    <property type="match status" value="1"/>
</dbReference>
<keyword id="KW-0269">Exonuclease</keyword>
<keyword id="KW-0378">Hydrolase</keyword>
<keyword id="KW-0460">Magnesium</keyword>
<keyword id="KW-0479">Metal-binding</keyword>
<keyword id="KW-0540">Nuclease</keyword>
<keyword id="KW-1185">Reference proteome</keyword>
<keyword id="KW-0819">tRNA processing</keyword>
<protein>
    <recommendedName>
        <fullName evidence="1">Ribonuclease T</fullName>
        <ecNumber evidence="1">3.1.13.-</ecNumber>
    </recommendedName>
    <alternativeName>
        <fullName evidence="1">Exoribonuclease T</fullName>
        <shortName evidence="1">RNase T</shortName>
    </alternativeName>
</protein>
<comment type="function">
    <text evidence="1">Trims short 3' overhangs of a variety of RNA species, leaving a one or two nucleotide 3' overhang. Responsible for the end-turnover of tRNA: specifically removes the terminal AMP residue from uncharged tRNA (tRNA-C-C-A). Also appears to be involved in tRNA biosynthesis.</text>
</comment>
<comment type="cofactor">
    <cofactor evidence="1">
        <name>Mg(2+)</name>
        <dbReference type="ChEBI" id="CHEBI:18420"/>
    </cofactor>
    <text evidence="1">Binds two Mg(2+) per subunit. The active form of the enzyme binds two Mg(2+) ions in its active site. The first Mg(2+) forms only one salt bridge with the protein.</text>
</comment>
<comment type="subunit">
    <text evidence="1">Homodimer.</text>
</comment>
<comment type="similarity">
    <text evidence="1">Belongs to the RNase T family.</text>
</comment>
<proteinExistence type="inferred from homology"/>
<organism>
    <name type="scientific">Pseudomonas syringae pv. tomato (strain ATCC BAA-871 / DC3000)</name>
    <dbReference type="NCBI Taxonomy" id="223283"/>
    <lineage>
        <taxon>Bacteria</taxon>
        <taxon>Pseudomonadati</taxon>
        <taxon>Pseudomonadota</taxon>
        <taxon>Gammaproteobacteria</taxon>
        <taxon>Pseudomonadales</taxon>
        <taxon>Pseudomonadaceae</taxon>
        <taxon>Pseudomonas</taxon>
    </lineage>
</organism>
<name>RNT_PSESM</name>